<feature type="chain" id="PRO_0000291709" description="7,8-didemethyl-8-hydroxy-5-deazariboflavin synthase">
    <location>
        <begin position="1"/>
        <end position="340"/>
    </location>
</feature>
<feature type="domain" description="Radical SAM core" evidence="2">
    <location>
        <begin position="25"/>
        <end position="256"/>
    </location>
</feature>
<feature type="binding site" evidence="1">
    <location>
        <position position="39"/>
    </location>
    <ligand>
        <name>[4Fe-4S] cluster</name>
        <dbReference type="ChEBI" id="CHEBI:49883"/>
        <note>4Fe-4S-S-AdoMet</note>
    </ligand>
</feature>
<feature type="binding site" evidence="1">
    <location>
        <position position="43"/>
    </location>
    <ligand>
        <name>[4Fe-4S] cluster</name>
        <dbReference type="ChEBI" id="CHEBI:49883"/>
        <note>4Fe-4S-S-AdoMet</note>
    </ligand>
</feature>
<feature type="binding site" evidence="1">
    <location>
        <position position="46"/>
    </location>
    <ligand>
        <name>[4Fe-4S] cluster</name>
        <dbReference type="ChEBI" id="CHEBI:49883"/>
        <note>4Fe-4S-S-AdoMet</note>
    </ligand>
</feature>
<keyword id="KW-0004">4Fe-4S</keyword>
<keyword id="KW-0408">Iron</keyword>
<keyword id="KW-0411">Iron-sulfur</keyword>
<keyword id="KW-0456">Lyase</keyword>
<keyword id="KW-0479">Metal-binding</keyword>
<keyword id="KW-0949">S-adenosyl-L-methionine</keyword>
<evidence type="ECO:0000255" key="1">
    <source>
        <dbReference type="HAMAP-Rule" id="MF_01611"/>
    </source>
</evidence>
<evidence type="ECO:0000255" key="2">
    <source>
        <dbReference type="PROSITE-ProRule" id="PRU01266"/>
    </source>
</evidence>
<proteinExistence type="inferred from homology"/>
<comment type="function">
    <text evidence="1">Catalyzes the radical-mediated synthesis of 7,8-didemethyl-8-hydroxy-5-deazariboflavin from 5-amino-5-(4-hydroxybenzyl)-6-(D-ribitylimino)-5,6-dihydrouracil.</text>
</comment>
<comment type="catalytic activity">
    <reaction evidence="1">
        <text>5-amino-5-(4-hydroxybenzyl)-6-(D-ribitylimino)-5,6-dihydrouracil + S-adenosyl-L-methionine = 7,8-didemethyl-8-hydroxy-5-deazariboflavin + 5'-deoxyadenosine + L-methionine + NH4(+) + H(+)</text>
        <dbReference type="Rhea" id="RHEA:55204"/>
        <dbReference type="ChEBI" id="CHEBI:15378"/>
        <dbReference type="ChEBI" id="CHEBI:17319"/>
        <dbReference type="ChEBI" id="CHEBI:28938"/>
        <dbReference type="ChEBI" id="CHEBI:57844"/>
        <dbReference type="ChEBI" id="CHEBI:59789"/>
        <dbReference type="ChEBI" id="CHEBI:59904"/>
        <dbReference type="ChEBI" id="CHEBI:85936"/>
        <dbReference type="EC" id="4.3.1.32"/>
    </reaction>
</comment>
<comment type="cofactor">
    <cofactor evidence="1">
        <name>[4Fe-4S] cluster</name>
        <dbReference type="ChEBI" id="CHEBI:49883"/>
    </cofactor>
    <text evidence="1">Binds 1 [4Fe-4S] cluster. The cluster is coordinated with 3 cysteines and an exchangeable S-adenosyl-L-methionine.</text>
</comment>
<comment type="pathway">
    <text evidence="1">Cofactor biosynthesis; coenzyme F0 biosynthesis.</text>
</comment>
<comment type="subunit">
    <text evidence="1">Consists of two subunits, CofG and CofH.</text>
</comment>
<comment type="similarity">
    <text evidence="1">Belongs to the radical SAM superfamily. CofG family.</text>
</comment>
<accession>Q3MCR5</accession>
<gene>
    <name evidence="1" type="primary">cofG</name>
    <name type="ordered locus">Ava_1598</name>
</gene>
<name>COFG_TRIV2</name>
<protein>
    <recommendedName>
        <fullName evidence="1">7,8-didemethyl-8-hydroxy-5-deazariboflavin synthase</fullName>
        <ecNumber evidence="1">4.3.1.32</ecNumber>
    </recommendedName>
    <alternativeName>
        <fullName evidence="1">FO synthase subunit 1</fullName>
    </alternativeName>
</protein>
<organism>
    <name type="scientific">Trichormus variabilis (strain ATCC 29413 / PCC 7937)</name>
    <name type="common">Anabaena variabilis</name>
    <dbReference type="NCBI Taxonomy" id="240292"/>
    <lineage>
        <taxon>Bacteria</taxon>
        <taxon>Bacillati</taxon>
        <taxon>Cyanobacteriota</taxon>
        <taxon>Cyanophyceae</taxon>
        <taxon>Nostocales</taxon>
        <taxon>Nostocaceae</taxon>
        <taxon>Trichormus</taxon>
    </lineage>
</organism>
<reference key="1">
    <citation type="journal article" date="2014" name="Stand. Genomic Sci.">
        <title>Complete genome sequence of Anabaena variabilis ATCC 29413.</title>
        <authorList>
            <person name="Thiel T."/>
            <person name="Pratte B.S."/>
            <person name="Zhong J."/>
            <person name="Goodwin L."/>
            <person name="Copeland A."/>
            <person name="Lucas S."/>
            <person name="Han C."/>
            <person name="Pitluck S."/>
            <person name="Land M.L."/>
            <person name="Kyrpides N.C."/>
            <person name="Woyke T."/>
        </authorList>
    </citation>
    <scope>NUCLEOTIDE SEQUENCE [LARGE SCALE GENOMIC DNA]</scope>
    <source>
        <strain>ATCC 29413 / PCC 7937</strain>
    </source>
</reference>
<dbReference type="EC" id="4.3.1.32" evidence="1"/>
<dbReference type="EMBL" id="CP000117">
    <property type="protein sequence ID" value="ABA21221.1"/>
    <property type="molecule type" value="Genomic_DNA"/>
</dbReference>
<dbReference type="SMR" id="Q3MCR5"/>
<dbReference type="STRING" id="240292.Ava_1598"/>
<dbReference type="KEGG" id="ava:Ava_1598"/>
<dbReference type="eggNOG" id="COG1060">
    <property type="taxonomic scope" value="Bacteria"/>
</dbReference>
<dbReference type="HOGENOM" id="CLU_054174_0_0_3"/>
<dbReference type="UniPathway" id="UPA00072"/>
<dbReference type="Proteomes" id="UP000002533">
    <property type="component" value="Chromosome"/>
</dbReference>
<dbReference type="GO" id="GO:0051539">
    <property type="term" value="F:4 iron, 4 sulfur cluster binding"/>
    <property type="evidence" value="ECO:0007669"/>
    <property type="project" value="UniProtKB-KW"/>
</dbReference>
<dbReference type="GO" id="GO:0044689">
    <property type="term" value="F:7,8-didemethyl-8-hydroxy-5-deazariboflavin synthase activity"/>
    <property type="evidence" value="ECO:0007669"/>
    <property type="project" value="UniProtKB-EC"/>
</dbReference>
<dbReference type="GO" id="GO:0005506">
    <property type="term" value="F:iron ion binding"/>
    <property type="evidence" value="ECO:0007669"/>
    <property type="project" value="UniProtKB-UniRule"/>
</dbReference>
<dbReference type="GO" id="GO:0016765">
    <property type="term" value="F:transferase activity, transferring alkyl or aryl (other than methyl) groups"/>
    <property type="evidence" value="ECO:0007669"/>
    <property type="project" value="InterPro"/>
</dbReference>
<dbReference type="CDD" id="cd01335">
    <property type="entry name" value="Radical_SAM"/>
    <property type="match status" value="1"/>
</dbReference>
<dbReference type="Gene3D" id="3.20.20.70">
    <property type="entry name" value="Aldolase class I"/>
    <property type="match status" value="1"/>
</dbReference>
<dbReference type="HAMAP" id="MF_01611">
    <property type="entry name" value="FO_synth_sub1"/>
    <property type="match status" value="1"/>
</dbReference>
<dbReference type="InterPro" id="IPR013785">
    <property type="entry name" value="Aldolase_TIM"/>
</dbReference>
<dbReference type="InterPro" id="IPR019939">
    <property type="entry name" value="CofG_family"/>
</dbReference>
<dbReference type="InterPro" id="IPR006638">
    <property type="entry name" value="Elp3/MiaA/NifB-like_rSAM"/>
</dbReference>
<dbReference type="InterPro" id="IPR034405">
    <property type="entry name" value="F420"/>
</dbReference>
<dbReference type="InterPro" id="IPR007197">
    <property type="entry name" value="rSAM"/>
</dbReference>
<dbReference type="NCBIfam" id="TIGR03550">
    <property type="entry name" value="F420_cofG"/>
    <property type="match status" value="1"/>
</dbReference>
<dbReference type="NCBIfam" id="NF004884">
    <property type="entry name" value="PRK06245.1"/>
    <property type="match status" value="1"/>
</dbReference>
<dbReference type="PANTHER" id="PTHR43076:SF15">
    <property type="entry name" value="7,8-DIDEMETHYL-8-HYDROXY-5-DEAZARIBOFLAVIN SYNTHASE"/>
    <property type="match status" value="1"/>
</dbReference>
<dbReference type="PANTHER" id="PTHR43076">
    <property type="entry name" value="FO SYNTHASE (COFH)"/>
    <property type="match status" value="1"/>
</dbReference>
<dbReference type="Pfam" id="PF04055">
    <property type="entry name" value="Radical_SAM"/>
    <property type="match status" value="1"/>
</dbReference>
<dbReference type="SFLD" id="SFLDF00294">
    <property type="entry name" value="7_8-didemethyl-8-hydroxy-5-dea"/>
    <property type="match status" value="1"/>
</dbReference>
<dbReference type="SFLD" id="SFLDG01388">
    <property type="entry name" value="7_8-didemethyl-8-hydroxy-5-dea"/>
    <property type="match status" value="1"/>
</dbReference>
<dbReference type="SMART" id="SM00729">
    <property type="entry name" value="Elp3"/>
    <property type="match status" value="1"/>
</dbReference>
<dbReference type="SUPFAM" id="SSF102114">
    <property type="entry name" value="Radical SAM enzymes"/>
    <property type="match status" value="1"/>
</dbReference>
<dbReference type="PROSITE" id="PS51918">
    <property type="entry name" value="RADICAL_SAM"/>
    <property type="match status" value="1"/>
</dbReference>
<sequence length="340" mass="38291">MTVAESTCALVSTQPSIGKPTGGIATYSPAYTIVPTYECFNRCTYCNFRTDPGESSWMSLSAAEDIFKRLQNEQVCEILILSGEVHPNSPKRQVWFQRIYDLCKLALTLGFLPHTNAGPLSFAEMQELKSVNVSMGLMLEQLTPKLLETVHRHAPSKLPELRLQQLEWAGELQIPFTTGLLLGIGETNDDCWETLEAISKLHQRYHHIQEVILQPHSPGNQQTFNAPAFNPHQLPEVIAKARQILPSDITIQIPPNLVKDERWLLACVEAGARDLGGIGPKDEVNPDYPHLQAEELREILQPAGWDLMPRLPVYPQFDGWLSGELQASVRRWRELVIGNW</sequence>